<name>ATPB_ECOL6</name>
<proteinExistence type="inferred from homology"/>
<protein>
    <recommendedName>
        <fullName evidence="2">ATP synthase subunit beta</fullName>
        <ecNumber evidence="2">7.1.2.2</ecNumber>
    </recommendedName>
    <alternativeName>
        <fullName evidence="2">ATP synthase F1 sector subunit beta</fullName>
    </alternativeName>
    <alternativeName>
        <fullName evidence="2">F-ATPase subunit beta</fullName>
    </alternativeName>
</protein>
<evidence type="ECO:0000250" key="1"/>
<evidence type="ECO:0000255" key="2">
    <source>
        <dbReference type="HAMAP-Rule" id="MF_01347"/>
    </source>
</evidence>
<comment type="function">
    <text evidence="2">Produces ATP from ADP in the presence of a proton gradient across the membrane. The catalytic sites are hosted primarily by the beta subunits.</text>
</comment>
<comment type="catalytic activity">
    <reaction evidence="2">
        <text>ATP + H2O + 4 H(+)(in) = ADP + phosphate + 5 H(+)(out)</text>
        <dbReference type="Rhea" id="RHEA:57720"/>
        <dbReference type="ChEBI" id="CHEBI:15377"/>
        <dbReference type="ChEBI" id="CHEBI:15378"/>
        <dbReference type="ChEBI" id="CHEBI:30616"/>
        <dbReference type="ChEBI" id="CHEBI:43474"/>
        <dbReference type="ChEBI" id="CHEBI:456216"/>
        <dbReference type="EC" id="7.1.2.2"/>
    </reaction>
</comment>
<comment type="subunit">
    <text evidence="2">F-type ATPases have 2 components, CF(1) - the catalytic core - and CF(0) - the membrane proton channel. CF(1) has five subunits: alpha(3), beta(3), gamma(1), delta(1), epsilon(1). CF(0) has three main subunits: a(1), b(2) and c(9-12). The alpha and beta chains form an alternating ring which encloses part of the gamma chain. CF(1) is attached to CF(0) by a central stalk formed by the gamma and epsilon chains, while a peripheral stalk is formed by the delta and b chains.</text>
</comment>
<comment type="subcellular location">
    <subcellularLocation>
        <location evidence="2">Cell inner membrane</location>
        <topology evidence="2">Peripheral membrane protein</topology>
    </subcellularLocation>
</comment>
<comment type="similarity">
    <text evidence="2">Belongs to the ATPase alpha/beta chains family.</text>
</comment>
<accession>P0ABB5</accession>
<accession>P00824</accession>
<gene>
    <name evidence="2" type="primary">atpD</name>
    <name type="ordered locus">c4658</name>
</gene>
<reference key="1">
    <citation type="journal article" date="2002" name="Proc. Natl. Acad. Sci. U.S.A.">
        <title>Extensive mosaic structure revealed by the complete genome sequence of uropathogenic Escherichia coli.</title>
        <authorList>
            <person name="Welch R.A."/>
            <person name="Burland V."/>
            <person name="Plunkett G. III"/>
            <person name="Redford P."/>
            <person name="Roesch P."/>
            <person name="Rasko D."/>
            <person name="Buckles E.L."/>
            <person name="Liou S.-R."/>
            <person name="Boutin A."/>
            <person name="Hackett J."/>
            <person name="Stroud D."/>
            <person name="Mayhew G.F."/>
            <person name="Rose D.J."/>
            <person name="Zhou S."/>
            <person name="Schwartz D.C."/>
            <person name="Perna N.T."/>
            <person name="Mobley H.L.T."/>
            <person name="Donnenberg M.S."/>
            <person name="Blattner F.R."/>
        </authorList>
    </citation>
    <scope>NUCLEOTIDE SEQUENCE [LARGE SCALE GENOMIC DNA]</scope>
    <source>
        <strain>CFT073 / ATCC 700928 / UPEC</strain>
    </source>
</reference>
<organism>
    <name type="scientific">Escherichia coli O6:H1 (strain CFT073 / ATCC 700928 / UPEC)</name>
    <dbReference type="NCBI Taxonomy" id="199310"/>
    <lineage>
        <taxon>Bacteria</taxon>
        <taxon>Pseudomonadati</taxon>
        <taxon>Pseudomonadota</taxon>
        <taxon>Gammaproteobacteria</taxon>
        <taxon>Enterobacterales</taxon>
        <taxon>Enterobacteriaceae</taxon>
        <taxon>Escherichia</taxon>
    </lineage>
</organism>
<sequence length="460" mass="50325">MATGKIVQVIGAVVDVEFPQDAVPRVYDALEVQNGNERLVLEVQQQLGGGIVRTIAMGSSDGLRRGLDVKDLEHPIEVPVGKATLGRIMNVLGEPVDMKGEIGEEERWAIHRAAPSYEELSNSQELLETGIKVIDLMCPFAKGGKVGLFGGAGVGKTVNMMELIRNIAIEHSGYSVFAGVGERTREGNDFYHEMTDSNVIDKVSLVYGQMNEPPGNRLRVALTGLTMAEKFRDEGRDVLLFVDNIYRYTLAGTEVSALLGRMPSAVGYQPTLAEEMGVLQERITSTKTGSITSVQAVYVPADDLTDPSPATTFAHLDATVVLSRQIASLGIYPAVDPLDSTSRQLDPLVVGQEHYDTARGVQSILQRYQELKDIIAILGMDELSEEDKLVVARARKIQRFLSQPFFVAEVFTGSPGKYVSLKDTIRGFKGIMEGEYDHLPEQAFYMVGSIEEAVEKAKKL</sequence>
<keyword id="KW-0066">ATP synthesis</keyword>
<keyword id="KW-0067">ATP-binding</keyword>
<keyword id="KW-0997">Cell inner membrane</keyword>
<keyword id="KW-1003">Cell membrane</keyword>
<keyword id="KW-0139">CF(1)</keyword>
<keyword id="KW-0375">Hydrogen ion transport</keyword>
<keyword id="KW-0406">Ion transport</keyword>
<keyword id="KW-0472">Membrane</keyword>
<keyword id="KW-0547">Nucleotide-binding</keyword>
<keyword id="KW-1185">Reference proteome</keyword>
<keyword id="KW-1278">Translocase</keyword>
<keyword id="KW-0813">Transport</keyword>
<feature type="initiator methionine" description="Removed" evidence="1">
    <location>
        <position position="1"/>
    </location>
</feature>
<feature type="chain" id="PRO_0000144439" description="ATP synthase subunit beta">
    <location>
        <begin position="2"/>
        <end position="460"/>
    </location>
</feature>
<feature type="binding site" evidence="2">
    <location>
        <begin position="150"/>
        <end position="157"/>
    </location>
    <ligand>
        <name>ATP</name>
        <dbReference type="ChEBI" id="CHEBI:30616"/>
    </ligand>
</feature>
<dbReference type="EC" id="7.1.2.2" evidence="2"/>
<dbReference type="EMBL" id="AE014075">
    <property type="protein sequence ID" value="AAN83090.1"/>
    <property type="molecule type" value="Genomic_DNA"/>
</dbReference>
<dbReference type="RefSeq" id="WP_000190506.1">
    <property type="nucleotide sequence ID" value="NZ_CP051263.1"/>
</dbReference>
<dbReference type="SMR" id="P0ABB5"/>
<dbReference type="STRING" id="199310.c4658"/>
<dbReference type="GeneID" id="93778235"/>
<dbReference type="KEGG" id="ecc:c4658"/>
<dbReference type="eggNOG" id="COG0055">
    <property type="taxonomic scope" value="Bacteria"/>
</dbReference>
<dbReference type="HOGENOM" id="CLU_022398_0_2_6"/>
<dbReference type="BioCyc" id="ECOL199310:C4658-MONOMER"/>
<dbReference type="Proteomes" id="UP000001410">
    <property type="component" value="Chromosome"/>
</dbReference>
<dbReference type="GO" id="GO:0005886">
    <property type="term" value="C:plasma membrane"/>
    <property type="evidence" value="ECO:0007669"/>
    <property type="project" value="UniProtKB-SubCell"/>
</dbReference>
<dbReference type="GO" id="GO:0045259">
    <property type="term" value="C:proton-transporting ATP synthase complex"/>
    <property type="evidence" value="ECO:0007669"/>
    <property type="project" value="UniProtKB-KW"/>
</dbReference>
<dbReference type="GO" id="GO:0005524">
    <property type="term" value="F:ATP binding"/>
    <property type="evidence" value="ECO:0007669"/>
    <property type="project" value="UniProtKB-UniRule"/>
</dbReference>
<dbReference type="GO" id="GO:0016887">
    <property type="term" value="F:ATP hydrolysis activity"/>
    <property type="evidence" value="ECO:0007669"/>
    <property type="project" value="InterPro"/>
</dbReference>
<dbReference type="GO" id="GO:0046933">
    <property type="term" value="F:proton-transporting ATP synthase activity, rotational mechanism"/>
    <property type="evidence" value="ECO:0007669"/>
    <property type="project" value="UniProtKB-UniRule"/>
</dbReference>
<dbReference type="CDD" id="cd18110">
    <property type="entry name" value="ATP-synt_F1_beta_C"/>
    <property type="match status" value="1"/>
</dbReference>
<dbReference type="CDD" id="cd18115">
    <property type="entry name" value="ATP-synt_F1_beta_N"/>
    <property type="match status" value="1"/>
</dbReference>
<dbReference type="CDD" id="cd01133">
    <property type="entry name" value="F1-ATPase_beta_CD"/>
    <property type="match status" value="1"/>
</dbReference>
<dbReference type="FunFam" id="1.10.1140.10:FF:000001">
    <property type="entry name" value="ATP synthase subunit beta"/>
    <property type="match status" value="1"/>
</dbReference>
<dbReference type="FunFam" id="2.40.10.170:FF:000003">
    <property type="entry name" value="ATP synthase subunit beta"/>
    <property type="match status" value="1"/>
</dbReference>
<dbReference type="FunFam" id="3.40.50.300:FF:000004">
    <property type="entry name" value="ATP synthase subunit beta"/>
    <property type="match status" value="1"/>
</dbReference>
<dbReference type="Gene3D" id="2.40.10.170">
    <property type="match status" value="1"/>
</dbReference>
<dbReference type="Gene3D" id="1.10.1140.10">
    <property type="entry name" value="Bovine Mitochondrial F1-atpase, Atp Synthase Beta Chain, Chain D, domain 3"/>
    <property type="match status" value="1"/>
</dbReference>
<dbReference type="Gene3D" id="3.40.50.300">
    <property type="entry name" value="P-loop containing nucleotide triphosphate hydrolases"/>
    <property type="match status" value="1"/>
</dbReference>
<dbReference type="HAMAP" id="MF_01347">
    <property type="entry name" value="ATP_synth_beta_bact"/>
    <property type="match status" value="1"/>
</dbReference>
<dbReference type="InterPro" id="IPR003593">
    <property type="entry name" value="AAA+_ATPase"/>
</dbReference>
<dbReference type="InterPro" id="IPR055190">
    <property type="entry name" value="ATP-synt_VA_C"/>
</dbReference>
<dbReference type="InterPro" id="IPR005722">
    <property type="entry name" value="ATP_synth_F1_bsu"/>
</dbReference>
<dbReference type="InterPro" id="IPR020003">
    <property type="entry name" value="ATPase_a/bsu_AS"/>
</dbReference>
<dbReference type="InterPro" id="IPR050053">
    <property type="entry name" value="ATPase_alpha/beta_chains"/>
</dbReference>
<dbReference type="InterPro" id="IPR004100">
    <property type="entry name" value="ATPase_F1/V1/A1_a/bsu_N"/>
</dbReference>
<dbReference type="InterPro" id="IPR036121">
    <property type="entry name" value="ATPase_F1/V1/A1_a/bsu_N_sf"/>
</dbReference>
<dbReference type="InterPro" id="IPR000194">
    <property type="entry name" value="ATPase_F1/V1/A1_a/bsu_nucl-bd"/>
</dbReference>
<dbReference type="InterPro" id="IPR024034">
    <property type="entry name" value="ATPase_F1/V1_b/a_C"/>
</dbReference>
<dbReference type="InterPro" id="IPR027417">
    <property type="entry name" value="P-loop_NTPase"/>
</dbReference>
<dbReference type="NCBIfam" id="TIGR01039">
    <property type="entry name" value="atpD"/>
    <property type="match status" value="1"/>
</dbReference>
<dbReference type="PANTHER" id="PTHR15184">
    <property type="entry name" value="ATP SYNTHASE"/>
    <property type="match status" value="1"/>
</dbReference>
<dbReference type="PANTHER" id="PTHR15184:SF71">
    <property type="entry name" value="ATP SYNTHASE SUBUNIT BETA, MITOCHONDRIAL"/>
    <property type="match status" value="1"/>
</dbReference>
<dbReference type="Pfam" id="PF00006">
    <property type="entry name" value="ATP-synt_ab"/>
    <property type="match status" value="1"/>
</dbReference>
<dbReference type="Pfam" id="PF02874">
    <property type="entry name" value="ATP-synt_ab_N"/>
    <property type="match status" value="1"/>
</dbReference>
<dbReference type="Pfam" id="PF22919">
    <property type="entry name" value="ATP-synt_VA_C"/>
    <property type="match status" value="1"/>
</dbReference>
<dbReference type="SMART" id="SM00382">
    <property type="entry name" value="AAA"/>
    <property type="match status" value="1"/>
</dbReference>
<dbReference type="SUPFAM" id="SSF47917">
    <property type="entry name" value="C-terminal domain of alpha and beta subunits of F1 ATP synthase"/>
    <property type="match status" value="1"/>
</dbReference>
<dbReference type="SUPFAM" id="SSF50615">
    <property type="entry name" value="N-terminal domain of alpha and beta subunits of F1 ATP synthase"/>
    <property type="match status" value="1"/>
</dbReference>
<dbReference type="SUPFAM" id="SSF52540">
    <property type="entry name" value="P-loop containing nucleoside triphosphate hydrolases"/>
    <property type="match status" value="1"/>
</dbReference>
<dbReference type="PROSITE" id="PS00152">
    <property type="entry name" value="ATPASE_ALPHA_BETA"/>
    <property type="match status" value="1"/>
</dbReference>